<feature type="chain" id="PRO_0000165459" description="S-adenosylmethionine:tRNA ribosyltransferase-isomerase">
    <location>
        <begin position="1"/>
        <end position="341"/>
    </location>
</feature>
<dbReference type="EC" id="2.4.99.17" evidence="1"/>
<dbReference type="EMBL" id="AE008691">
    <property type="protein sequence ID" value="AAM24413.1"/>
    <property type="molecule type" value="Genomic_DNA"/>
</dbReference>
<dbReference type="RefSeq" id="WP_011025517.1">
    <property type="nucleotide sequence ID" value="NC_003869.1"/>
</dbReference>
<dbReference type="SMR" id="Q8RAN0"/>
<dbReference type="STRING" id="273068.TTE1182"/>
<dbReference type="KEGG" id="tte:TTE1182"/>
<dbReference type="eggNOG" id="COG0809">
    <property type="taxonomic scope" value="Bacteria"/>
</dbReference>
<dbReference type="HOGENOM" id="CLU_039110_1_0_9"/>
<dbReference type="OrthoDB" id="9805933at2"/>
<dbReference type="UniPathway" id="UPA00392"/>
<dbReference type="Proteomes" id="UP000000555">
    <property type="component" value="Chromosome"/>
</dbReference>
<dbReference type="GO" id="GO:0005737">
    <property type="term" value="C:cytoplasm"/>
    <property type="evidence" value="ECO:0007669"/>
    <property type="project" value="UniProtKB-SubCell"/>
</dbReference>
<dbReference type="GO" id="GO:0051075">
    <property type="term" value="F:S-adenosylmethionine:tRNA ribosyltransferase-isomerase activity"/>
    <property type="evidence" value="ECO:0007669"/>
    <property type="project" value="UniProtKB-EC"/>
</dbReference>
<dbReference type="GO" id="GO:0008616">
    <property type="term" value="P:queuosine biosynthetic process"/>
    <property type="evidence" value="ECO:0007669"/>
    <property type="project" value="UniProtKB-UniRule"/>
</dbReference>
<dbReference type="GO" id="GO:0002099">
    <property type="term" value="P:tRNA wobble guanine modification"/>
    <property type="evidence" value="ECO:0007669"/>
    <property type="project" value="TreeGrafter"/>
</dbReference>
<dbReference type="FunFam" id="2.40.10.240:FF:000002">
    <property type="entry name" value="S-adenosylmethionine:tRNA ribosyltransferase-isomerase"/>
    <property type="match status" value="1"/>
</dbReference>
<dbReference type="FunFam" id="3.40.1780.10:FF:000001">
    <property type="entry name" value="S-adenosylmethionine:tRNA ribosyltransferase-isomerase"/>
    <property type="match status" value="1"/>
</dbReference>
<dbReference type="Gene3D" id="2.40.10.240">
    <property type="entry name" value="QueA-like"/>
    <property type="match status" value="1"/>
</dbReference>
<dbReference type="Gene3D" id="3.40.1780.10">
    <property type="entry name" value="QueA-like"/>
    <property type="match status" value="1"/>
</dbReference>
<dbReference type="HAMAP" id="MF_00113">
    <property type="entry name" value="QueA"/>
    <property type="match status" value="1"/>
</dbReference>
<dbReference type="InterPro" id="IPR003699">
    <property type="entry name" value="QueA"/>
</dbReference>
<dbReference type="InterPro" id="IPR042118">
    <property type="entry name" value="QueA_dom1"/>
</dbReference>
<dbReference type="InterPro" id="IPR042119">
    <property type="entry name" value="QueA_dom2"/>
</dbReference>
<dbReference type="InterPro" id="IPR036100">
    <property type="entry name" value="QueA_sf"/>
</dbReference>
<dbReference type="NCBIfam" id="NF001140">
    <property type="entry name" value="PRK00147.1"/>
    <property type="match status" value="1"/>
</dbReference>
<dbReference type="NCBIfam" id="TIGR00113">
    <property type="entry name" value="queA"/>
    <property type="match status" value="1"/>
</dbReference>
<dbReference type="PANTHER" id="PTHR30307">
    <property type="entry name" value="S-ADENOSYLMETHIONINE:TRNA RIBOSYLTRANSFERASE-ISOMERASE"/>
    <property type="match status" value="1"/>
</dbReference>
<dbReference type="PANTHER" id="PTHR30307:SF0">
    <property type="entry name" value="S-ADENOSYLMETHIONINE:TRNA RIBOSYLTRANSFERASE-ISOMERASE"/>
    <property type="match status" value="1"/>
</dbReference>
<dbReference type="Pfam" id="PF02547">
    <property type="entry name" value="Queuosine_synth"/>
    <property type="match status" value="1"/>
</dbReference>
<dbReference type="SUPFAM" id="SSF111337">
    <property type="entry name" value="QueA-like"/>
    <property type="match status" value="1"/>
</dbReference>
<keyword id="KW-0963">Cytoplasm</keyword>
<keyword id="KW-0671">Queuosine biosynthesis</keyword>
<keyword id="KW-1185">Reference proteome</keyword>
<keyword id="KW-0949">S-adenosyl-L-methionine</keyword>
<keyword id="KW-0808">Transferase</keyword>
<accession>Q8RAN0</accession>
<comment type="function">
    <text evidence="1">Transfers and isomerizes the ribose moiety from AdoMet to the 7-aminomethyl group of 7-deazaguanine (preQ1-tRNA) to give epoxyqueuosine (oQ-tRNA).</text>
</comment>
<comment type="catalytic activity">
    <reaction evidence="1">
        <text>7-aminomethyl-7-carbaguanosine(34) in tRNA + S-adenosyl-L-methionine = epoxyqueuosine(34) in tRNA + adenine + L-methionine + 2 H(+)</text>
        <dbReference type="Rhea" id="RHEA:32155"/>
        <dbReference type="Rhea" id="RHEA-COMP:10342"/>
        <dbReference type="Rhea" id="RHEA-COMP:18582"/>
        <dbReference type="ChEBI" id="CHEBI:15378"/>
        <dbReference type="ChEBI" id="CHEBI:16708"/>
        <dbReference type="ChEBI" id="CHEBI:57844"/>
        <dbReference type="ChEBI" id="CHEBI:59789"/>
        <dbReference type="ChEBI" id="CHEBI:82833"/>
        <dbReference type="ChEBI" id="CHEBI:194443"/>
        <dbReference type="EC" id="2.4.99.17"/>
    </reaction>
</comment>
<comment type="pathway">
    <text evidence="1">tRNA modification; tRNA-queuosine biosynthesis.</text>
</comment>
<comment type="subunit">
    <text evidence="1">Monomer.</text>
</comment>
<comment type="subcellular location">
    <subcellularLocation>
        <location evidence="1">Cytoplasm</location>
    </subcellularLocation>
</comment>
<comment type="similarity">
    <text evidence="1">Belongs to the QueA family.</text>
</comment>
<name>QUEA_CALS4</name>
<organism>
    <name type="scientific">Caldanaerobacter subterraneus subsp. tengcongensis (strain DSM 15242 / JCM 11007 / NBRC 100824 / MB4)</name>
    <name type="common">Thermoanaerobacter tengcongensis</name>
    <dbReference type="NCBI Taxonomy" id="273068"/>
    <lineage>
        <taxon>Bacteria</taxon>
        <taxon>Bacillati</taxon>
        <taxon>Bacillota</taxon>
        <taxon>Clostridia</taxon>
        <taxon>Thermoanaerobacterales</taxon>
        <taxon>Thermoanaerobacteraceae</taxon>
        <taxon>Caldanaerobacter</taxon>
    </lineage>
</organism>
<sequence>MKRSEFYFDLPEELIAQEPLEDRASSRLMILDRRTGEIKHDIFKNITKYLKEGDCLVLNDTKVIPARLIGQREDSGGKVELLLLRRTSMNEWEVLVKPGKRAKVGKRVVFGNGELVAEIIDTTEAGGRIARFYYDGVFEEVLDRLGEMPVPPYIKKKLKDKNRYQTVYAKYEGSAAAPTAGLHFTEELLDEIRNMGVKTVFITLHVGLGTFRPVKEEIIENHKMHEEFYIVTEEAAKAINEARKNGGRIIAVGTTSTRTLETVADESGYIHPKSGWTDIFIYPGYKFKAIDGMITNFHLPESTLIMMVSAFAGKENIMRAYKVAIENKYRFFSFGDAMLII</sequence>
<gene>
    <name evidence="1" type="primary">queA</name>
    <name type="ordered locus">TTE1182</name>
</gene>
<reference key="1">
    <citation type="journal article" date="2002" name="Genome Res.">
        <title>A complete sequence of the T. tengcongensis genome.</title>
        <authorList>
            <person name="Bao Q."/>
            <person name="Tian Y."/>
            <person name="Li W."/>
            <person name="Xu Z."/>
            <person name="Xuan Z."/>
            <person name="Hu S."/>
            <person name="Dong W."/>
            <person name="Yang J."/>
            <person name="Chen Y."/>
            <person name="Xue Y."/>
            <person name="Xu Y."/>
            <person name="Lai X."/>
            <person name="Huang L."/>
            <person name="Dong X."/>
            <person name="Ma Y."/>
            <person name="Ling L."/>
            <person name="Tan H."/>
            <person name="Chen R."/>
            <person name="Wang J."/>
            <person name="Yu J."/>
            <person name="Yang H."/>
        </authorList>
    </citation>
    <scope>NUCLEOTIDE SEQUENCE [LARGE SCALE GENOMIC DNA]</scope>
    <source>
        <strain>DSM 15242 / JCM 11007 / NBRC 100824 / MB4</strain>
    </source>
</reference>
<evidence type="ECO:0000255" key="1">
    <source>
        <dbReference type="HAMAP-Rule" id="MF_00113"/>
    </source>
</evidence>
<proteinExistence type="inferred from homology"/>
<protein>
    <recommendedName>
        <fullName evidence="1">S-adenosylmethionine:tRNA ribosyltransferase-isomerase</fullName>
        <ecNumber evidence="1">2.4.99.17</ecNumber>
    </recommendedName>
    <alternativeName>
        <fullName evidence="1">Queuosine biosynthesis protein QueA</fullName>
    </alternativeName>
</protein>